<accession>Q0HTZ6</accession>
<evidence type="ECO:0000255" key="1">
    <source>
        <dbReference type="HAMAP-Rule" id="MF_00510"/>
    </source>
</evidence>
<gene>
    <name evidence="1" type="primary">pepE</name>
    <name type="ordered locus">Shewmr7_2424</name>
</gene>
<keyword id="KW-0963">Cytoplasm</keyword>
<keyword id="KW-0224">Dipeptidase</keyword>
<keyword id="KW-0378">Hydrolase</keyword>
<keyword id="KW-0645">Protease</keyword>
<keyword id="KW-0720">Serine protease</keyword>
<feature type="chain" id="PRO_1000050620" description="Peptidase E">
    <location>
        <begin position="1"/>
        <end position="236"/>
    </location>
</feature>
<feature type="active site" description="Charge relay system" evidence="1">
    <location>
        <position position="122"/>
    </location>
</feature>
<feature type="active site" description="Charge relay system" evidence="1">
    <location>
        <position position="137"/>
    </location>
</feature>
<feature type="active site" description="Charge relay system" evidence="1">
    <location>
        <position position="159"/>
    </location>
</feature>
<sequence length="236" mass="25958">MTVNALLLSSSRVGDTPYLSHAIPFIKPLTTNAQKWIFIPYAGVSMSYDTYLASVVAGLSELRLDISGIHQHPDPRQAIKDADGILIGGGNTFHLLHELYKYDLVHLIREEVMNGKPYIGWSAGSNVSGLSIRTTNDMPIIEPPSFTALNIVPFQLNPHYSNYRAPGHNGETRAQRLLEFTRVDPITPVVGIVEGSALWRQGETLSLLGDNPAYLFCGEQQEIPIPVGSDLSHLLK</sequence>
<protein>
    <recommendedName>
        <fullName evidence="1">Peptidase E</fullName>
        <ecNumber evidence="1">3.4.13.21</ecNumber>
    </recommendedName>
    <alternativeName>
        <fullName evidence="1">Alpha-aspartyl dipeptidase</fullName>
    </alternativeName>
    <alternativeName>
        <fullName evidence="1">Asp-specific dipeptidase</fullName>
    </alternativeName>
    <alternativeName>
        <fullName evidence="1">Dipeptidase E</fullName>
    </alternativeName>
</protein>
<name>PEPE_SHESR</name>
<comment type="function">
    <text evidence="1">Hydrolyzes dipeptides containing N-terminal aspartate residues. May play a role in allowing the cell to use peptide aspartate to spare carbon otherwise required for the synthesis of the aspartate family of amino acids.</text>
</comment>
<comment type="catalytic activity">
    <reaction evidence="1">
        <text>Dipeptidase E catalyzes the hydrolysis of dipeptides Asp-|-Xaa. It does not act on peptides with N-terminal Glu, Asn or Gln, nor does it cleave isoaspartyl peptides.</text>
        <dbReference type="EC" id="3.4.13.21"/>
    </reaction>
</comment>
<comment type="subcellular location">
    <subcellularLocation>
        <location evidence="1">Cytoplasm</location>
    </subcellularLocation>
</comment>
<comment type="similarity">
    <text evidence="1">Belongs to the peptidase S51 family.</text>
</comment>
<reference key="1">
    <citation type="submission" date="2006-08" db="EMBL/GenBank/DDBJ databases">
        <title>Complete sequence of chromosome 1 of Shewanella sp. MR-7.</title>
        <authorList>
            <person name="Copeland A."/>
            <person name="Lucas S."/>
            <person name="Lapidus A."/>
            <person name="Barry K."/>
            <person name="Detter J.C."/>
            <person name="Glavina del Rio T."/>
            <person name="Hammon N."/>
            <person name="Israni S."/>
            <person name="Dalin E."/>
            <person name="Tice H."/>
            <person name="Pitluck S."/>
            <person name="Kiss H."/>
            <person name="Brettin T."/>
            <person name="Bruce D."/>
            <person name="Han C."/>
            <person name="Tapia R."/>
            <person name="Gilna P."/>
            <person name="Schmutz J."/>
            <person name="Larimer F."/>
            <person name="Land M."/>
            <person name="Hauser L."/>
            <person name="Kyrpides N."/>
            <person name="Mikhailova N."/>
            <person name="Nealson K."/>
            <person name="Konstantinidis K."/>
            <person name="Klappenbach J."/>
            <person name="Tiedje J."/>
            <person name="Richardson P."/>
        </authorList>
    </citation>
    <scope>NUCLEOTIDE SEQUENCE [LARGE SCALE GENOMIC DNA]</scope>
    <source>
        <strain>MR-7</strain>
    </source>
</reference>
<organism>
    <name type="scientific">Shewanella sp. (strain MR-7)</name>
    <dbReference type="NCBI Taxonomy" id="60481"/>
    <lineage>
        <taxon>Bacteria</taxon>
        <taxon>Pseudomonadati</taxon>
        <taxon>Pseudomonadota</taxon>
        <taxon>Gammaproteobacteria</taxon>
        <taxon>Alteromonadales</taxon>
        <taxon>Shewanellaceae</taxon>
        <taxon>Shewanella</taxon>
    </lineage>
</organism>
<proteinExistence type="inferred from homology"/>
<dbReference type="EC" id="3.4.13.21" evidence="1"/>
<dbReference type="EMBL" id="CP000444">
    <property type="protein sequence ID" value="ABI43409.1"/>
    <property type="molecule type" value="Genomic_DNA"/>
</dbReference>
<dbReference type="SMR" id="Q0HTZ6"/>
<dbReference type="MEROPS" id="S51.001"/>
<dbReference type="KEGG" id="shm:Shewmr7_2424"/>
<dbReference type="HOGENOM" id="CLU_071689_0_0_6"/>
<dbReference type="GO" id="GO:0005737">
    <property type="term" value="C:cytoplasm"/>
    <property type="evidence" value="ECO:0007669"/>
    <property type="project" value="UniProtKB-SubCell"/>
</dbReference>
<dbReference type="GO" id="GO:0016805">
    <property type="term" value="F:dipeptidase activity"/>
    <property type="evidence" value="ECO:0007669"/>
    <property type="project" value="UniProtKB-UniRule"/>
</dbReference>
<dbReference type="GO" id="GO:0008236">
    <property type="term" value="F:serine-type peptidase activity"/>
    <property type="evidence" value="ECO:0007669"/>
    <property type="project" value="UniProtKB-KW"/>
</dbReference>
<dbReference type="GO" id="GO:0006508">
    <property type="term" value="P:proteolysis"/>
    <property type="evidence" value="ECO:0007669"/>
    <property type="project" value="UniProtKB-UniRule"/>
</dbReference>
<dbReference type="CDD" id="cd03146">
    <property type="entry name" value="GAT1_Peptidase_E"/>
    <property type="match status" value="1"/>
</dbReference>
<dbReference type="FunFam" id="3.40.50.880:FF:000007">
    <property type="entry name" value="Peptidase E"/>
    <property type="match status" value="1"/>
</dbReference>
<dbReference type="Gene3D" id="3.40.50.880">
    <property type="match status" value="1"/>
</dbReference>
<dbReference type="HAMAP" id="MF_00510">
    <property type="entry name" value="Peptidase_E"/>
    <property type="match status" value="1"/>
</dbReference>
<dbReference type="InterPro" id="IPR029062">
    <property type="entry name" value="Class_I_gatase-like"/>
</dbReference>
<dbReference type="InterPro" id="IPR005320">
    <property type="entry name" value="Peptidase_S51"/>
</dbReference>
<dbReference type="InterPro" id="IPR023172">
    <property type="entry name" value="Peptidase_S51_dipeptidase-E"/>
</dbReference>
<dbReference type="NCBIfam" id="NF003642">
    <property type="entry name" value="PRK05282.1"/>
    <property type="match status" value="1"/>
</dbReference>
<dbReference type="PANTHER" id="PTHR20842:SF0">
    <property type="entry name" value="ALPHA-ASPARTYL DIPEPTIDASE"/>
    <property type="match status" value="1"/>
</dbReference>
<dbReference type="PANTHER" id="PTHR20842">
    <property type="entry name" value="PROTEASE S51 ALPHA-ASPARTYL DIPEPTIDASE"/>
    <property type="match status" value="1"/>
</dbReference>
<dbReference type="Pfam" id="PF03575">
    <property type="entry name" value="Peptidase_S51"/>
    <property type="match status" value="1"/>
</dbReference>
<dbReference type="SUPFAM" id="SSF52317">
    <property type="entry name" value="Class I glutamine amidotransferase-like"/>
    <property type="match status" value="1"/>
</dbReference>